<dbReference type="EC" id="5.3.1.9" evidence="1"/>
<dbReference type="EMBL" id="CP000886">
    <property type="protein sequence ID" value="ABX70477.1"/>
    <property type="molecule type" value="Genomic_DNA"/>
</dbReference>
<dbReference type="RefSeq" id="WP_000790037.1">
    <property type="nucleotide sequence ID" value="NC_010102.1"/>
</dbReference>
<dbReference type="SMR" id="A9N1J6"/>
<dbReference type="KEGG" id="spq:SPAB_05200"/>
<dbReference type="PATRIC" id="fig|1016998.12.peg.4870"/>
<dbReference type="HOGENOM" id="CLU_017947_3_1_6"/>
<dbReference type="BioCyc" id="SENT1016998:SPAB_RS21180-MONOMER"/>
<dbReference type="UniPathway" id="UPA00109">
    <property type="reaction ID" value="UER00181"/>
</dbReference>
<dbReference type="UniPathway" id="UPA00138"/>
<dbReference type="Proteomes" id="UP000008556">
    <property type="component" value="Chromosome"/>
</dbReference>
<dbReference type="GO" id="GO:0005829">
    <property type="term" value="C:cytosol"/>
    <property type="evidence" value="ECO:0007669"/>
    <property type="project" value="TreeGrafter"/>
</dbReference>
<dbReference type="GO" id="GO:0097367">
    <property type="term" value="F:carbohydrate derivative binding"/>
    <property type="evidence" value="ECO:0007669"/>
    <property type="project" value="InterPro"/>
</dbReference>
<dbReference type="GO" id="GO:0004347">
    <property type="term" value="F:glucose-6-phosphate isomerase activity"/>
    <property type="evidence" value="ECO:0007669"/>
    <property type="project" value="UniProtKB-UniRule"/>
</dbReference>
<dbReference type="GO" id="GO:0048029">
    <property type="term" value="F:monosaccharide binding"/>
    <property type="evidence" value="ECO:0007669"/>
    <property type="project" value="TreeGrafter"/>
</dbReference>
<dbReference type="GO" id="GO:0006094">
    <property type="term" value="P:gluconeogenesis"/>
    <property type="evidence" value="ECO:0007669"/>
    <property type="project" value="UniProtKB-UniRule"/>
</dbReference>
<dbReference type="GO" id="GO:0051156">
    <property type="term" value="P:glucose 6-phosphate metabolic process"/>
    <property type="evidence" value="ECO:0007669"/>
    <property type="project" value="TreeGrafter"/>
</dbReference>
<dbReference type="GO" id="GO:0006096">
    <property type="term" value="P:glycolytic process"/>
    <property type="evidence" value="ECO:0007669"/>
    <property type="project" value="UniProtKB-UniRule"/>
</dbReference>
<dbReference type="CDD" id="cd05015">
    <property type="entry name" value="SIS_PGI_1"/>
    <property type="match status" value="1"/>
</dbReference>
<dbReference type="CDD" id="cd05016">
    <property type="entry name" value="SIS_PGI_2"/>
    <property type="match status" value="1"/>
</dbReference>
<dbReference type="FunFam" id="1.10.1390.10:FF:000001">
    <property type="entry name" value="Glucose-6-phosphate isomerase"/>
    <property type="match status" value="1"/>
</dbReference>
<dbReference type="FunFam" id="3.40.50.10490:FF:000004">
    <property type="entry name" value="Glucose-6-phosphate isomerase"/>
    <property type="match status" value="1"/>
</dbReference>
<dbReference type="Gene3D" id="1.10.1390.10">
    <property type="match status" value="1"/>
</dbReference>
<dbReference type="Gene3D" id="3.40.50.10490">
    <property type="entry name" value="Glucose-6-phosphate isomerase like protein, domain 1"/>
    <property type="match status" value="2"/>
</dbReference>
<dbReference type="HAMAP" id="MF_00473">
    <property type="entry name" value="G6P_isomerase"/>
    <property type="match status" value="1"/>
</dbReference>
<dbReference type="InterPro" id="IPR001672">
    <property type="entry name" value="G6P_Isomerase"/>
</dbReference>
<dbReference type="InterPro" id="IPR023096">
    <property type="entry name" value="G6P_Isomerase_C"/>
</dbReference>
<dbReference type="InterPro" id="IPR018189">
    <property type="entry name" value="Phosphoglucose_isomerase_CS"/>
</dbReference>
<dbReference type="InterPro" id="IPR046348">
    <property type="entry name" value="SIS_dom_sf"/>
</dbReference>
<dbReference type="InterPro" id="IPR035476">
    <property type="entry name" value="SIS_PGI_1"/>
</dbReference>
<dbReference type="InterPro" id="IPR035482">
    <property type="entry name" value="SIS_PGI_2"/>
</dbReference>
<dbReference type="NCBIfam" id="NF001211">
    <property type="entry name" value="PRK00179.1"/>
    <property type="match status" value="1"/>
</dbReference>
<dbReference type="PANTHER" id="PTHR11469">
    <property type="entry name" value="GLUCOSE-6-PHOSPHATE ISOMERASE"/>
    <property type="match status" value="1"/>
</dbReference>
<dbReference type="PANTHER" id="PTHR11469:SF1">
    <property type="entry name" value="GLUCOSE-6-PHOSPHATE ISOMERASE"/>
    <property type="match status" value="1"/>
</dbReference>
<dbReference type="Pfam" id="PF00342">
    <property type="entry name" value="PGI"/>
    <property type="match status" value="1"/>
</dbReference>
<dbReference type="PRINTS" id="PR00662">
    <property type="entry name" value="G6PISOMERASE"/>
</dbReference>
<dbReference type="SUPFAM" id="SSF53697">
    <property type="entry name" value="SIS domain"/>
    <property type="match status" value="1"/>
</dbReference>
<dbReference type="PROSITE" id="PS00765">
    <property type="entry name" value="P_GLUCOSE_ISOMERASE_1"/>
    <property type="match status" value="1"/>
</dbReference>
<dbReference type="PROSITE" id="PS00174">
    <property type="entry name" value="P_GLUCOSE_ISOMERASE_2"/>
    <property type="match status" value="1"/>
</dbReference>
<dbReference type="PROSITE" id="PS51463">
    <property type="entry name" value="P_GLUCOSE_ISOMERASE_3"/>
    <property type="match status" value="1"/>
</dbReference>
<reference key="1">
    <citation type="submission" date="2007-11" db="EMBL/GenBank/DDBJ databases">
        <authorList>
            <consortium name="The Salmonella enterica serovar Paratyphi B Genome Sequencing Project"/>
            <person name="McClelland M."/>
            <person name="Sanderson E.K."/>
            <person name="Porwollik S."/>
            <person name="Spieth J."/>
            <person name="Clifton W.S."/>
            <person name="Fulton R."/>
            <person name="Cordes M."/>
            <person name="Wollam A."/>
            <person name="Shah N."/>
            <person name="Pepin K."/>
            <person name="Bhonagiri V."/>
            <person name="Nash W."/>
            <person name="Johnson M."/>
            <person name="Thiruvilangam P."/>
            <person name="Wilson R."/>
        </authorList>
    </citation>
    <scope>NUCLEOTIDE SEQUENCE [LARGE SCALE GENOMIC DNA]</scope>
    <source>
        <strain>ATCC BAA-1250 / SPB7</strain>
    </source>
</reference>
<organism>
    <name type="scientific">Salmonella paratyphi B (strain ATCC BAA-1250 / SPB7)</name>
    <dbReference type="NCBI Taxonomy" id="1016998"/>
    <lineage>
        <taxon>Bacteria</taxon>
        <taxon>Pseudomonadati</taxon>
        <taxon>Pseudomonadota</taxon>
        <taxon>Gammaproteobacteria</taxon>
        <taxon>Enterobacterales</taxon>
        <taxon>Enterobacteriaceae</taxon>
        <taxon>Salmonella</taxon>
    </lineage>
</organism>
<feature type="chain" id="PRO_1000081247" description="Glucose-6-phosphate isomerase">
    <location>
        <begin position="1"/>
        <end position="549"/>
    </location>
</feature>
<feature type="active site" description="Proton donor" evidence="1">
    <location>
        <position position="355"/>
    </location>
</feature>
<feature type="active site" evidence="1">
    <location>
        <position position="386"/>
    </location>
</feature>
<feature type="active site" evidence="1">
    <location>
        <position position="514"/>
    </location>
</feature>
<sequence>MKNINPTQTSAWQALQKHYDEMKDVTIAELFANDSDRFAKFSATFDDLMLVDFSKNRITEETLAKLQDLAKETDLAGAIKSMFSGEKINRTEDRAVLHVALRNRSNTPIIVDGKDVMPEVNAVLEKMKTFSQAIISGQWKGYTGKAITDVVNIGIGGSDLGPFMVTEALRPYKNHLTMHFVSNVDGTHIAEVLKKVNPETTLFLVASKTFTTQETMTNAHSARDWFLKTAGDEKHVAKHFAALSTNAKAVGEFGIDTANMFEFWDWVGGRYSLWSAIGLSIILSVGFDNFVELLSGAHAMDKHFSTTPAEKNLPILLALIGIWYNNFFGAETEAILPYDQYMHRFAAYFQQGNMESNGKYVDRNGNAVDYQTGPIIWGEPGTNGQHAFYQLIHQGTKMVPCDFIAPAITHNPLSDHHQKLLSNFFAQTEALAFGKSREVVEQEYRDQGKDPAQLEHVVPFKVFEGNRPTNSILLREITPFSLGALIALYEHKIFTQGVILNIFTFDQWGVELGKQLANRILPELGDDKAISSHDSSTNGLINRYKAWRA</sequence>
<protein>
    <recommendedName>
        <fullName evidence="1">Glucose-6-phosphate isomerase</fullName>
        <shortName evidence="1">GPI</shortName>
        <ecNumber evidence="1">5.3.1.9</ecNumber>
    </recommendedName>
    <alternativeName>
        <fullName evidence="1">Phosphoglucose isomerase</fullName>
        <shortName evidence="1">PGI</shortName>
    </alternativeName>
    <alternativeName>
        <fullName evidence="1">Phosphohexose isomerase</fullName>
        <shortName evidence="1">PHI</shortName>
    </alternativeName>
</protein>
<keyword id="KW-0963">Cytoplasm</keyword>
<keyword id="KW-0312">Gluconeogenesis</keyword>
<keyword id="KW-0324">Glycolysis</keyword>
<keyword id="KW-0413">Isomerase</keyword>
<comment type="function">
    <text evidence="1">Catalyzes the reversible isomerization of glucose-6-phosphate to fructose-6-phosphate.</text>
</comment>
<comment type="catalytic activity">
    <reaction evidence="1">
        <text>alpha-D-glucose 6-phosphate = beta-D-fructose 6-phosphate</text>
        <dbReference type="Rhea" id="RHEA:11816"/>
        <dbReference type="ChEBI" id="CHEBI:57634"/>
        <dbReference type="ChEBI" id="CHEBI:58225"/>
        <dbReference type="EC" id="5.3.1.9"/>
    </reaction>
</comment>
<comment type="pathway">
    <text evidence="1">Carbohydrate biosynthesis; gluconeogenesis.</text>
</comment>
<comment type="pathway">
    <text evidence="1">Carbohydrate degradation; glycolysis; D-glyceraldehyde 3-phosphate and glycerone phosphate from D-glucose: step 2/4.</text>
</comment>
<comment type="subcellular location">
    <subcellularLocation>
        <location evidence="1">Cytoplasm</location>
    </subcellularLocation>
</comment>
<comment type="similarity">
    <text evidence="1">Belongs to the GPI family.</text>
</comment>
<evidence type="ECO:0000255" key="1">
    <source>
        <dbReference type="HAMAP-Rule" id="MF_00473"/>
    </source>
</evidence>
<accession>A9N1J6</accession>
<gene>
    <name evidence="1" type="primary">pgi</name>
    <name type="ordered locus">SPAB_05200</name>
</gene>
<name>G6PI_SALPB</name>
<proteinExistence type="inferred from homology"/>